<dbReference type="EC" id="6.3.4.4" evidence="1"/>
<dbReference type="EMBL" id="AF051374">
    <property type="protein sequence ID" value="AAC05693.1"/>
    <property type="molecule type" value="Genomic_DNA"/>
</dbReference>
<dbReference type="SMR" id="O68581"/>
<dbReference type="STRING" id="1408287.GCA_000493815_01107"/>
<dbReference type="eggNOG" id="COG0104">
    <property type="taxonomic scope" value="Bacteria"/>
</dbReference>
<dbReference type="UniPathway" id="UPA00075">
    <property type="reaction ID" value="UER00335"/>
</dbReference>
<dbReference type="GO" id="GO:0005737">
    <property type="term" value="C:cytoplasm"/>
    <property type="evidence" value="ECO:0007669"/>
    <property type="project" value="UniProtKB-SubCell"/>
</dbReference>
<dbReference type="GO" id="GO:0004019">
    <property type="term" value="F:adenylosuccinate synthase activity"/>
    <property type="evidence" value="ECO:0007669"/>
    <property type="project" value="UniProtKB-UniRule"/>
</dbReference>
<dbReference type="GO" id="GO:0005525">
    <property type="term" value="F:GTP binding"/>
    <property type="evidence" value="ECO:0007669"/>
    <property type="project" value="UniProtKB-UniRule"/>
</dbReference>
<dbReference type="GO" id="GO:0000287">
    <property type="term" value="F:magnesium ion binding"/>
    <property type="evidence" value="ECO:0007669"/>
    <property type="project" value="UniProtKB-UniRule"/>
</dbReference>
<dbReference type="GO" id="GO:0044208">
    <property type="term" value="P:'de novo' AMP biosynthetic process"/>
    <property type="evidence" value="ECO:0007669"/>
    <property type="project" value="UniProtKB-UniRule"/>
</dbReference>
<dbReference type="GO" id="GO:0046040">
    <property type="term" value="P:IMP metabolic process"/>
    <property type="evidence" value="ECO:0007669"/>
    <property type="project" value="TreeGrafter"/>
</dbReference>
<dbReference type="CDD" id="cd03108">
    <property type="entry name" value="AdSS"/>
    <property type="match status" value="1"/>
</dbReference>
<dbReference type="FunFam" id="1.10.300.10:FF:000001">
    <property type="entry name" value="Adenylosuccinate synthetase"/>
    <property type="match status" value="1"/>
</dbReference>
<dbReference type="FunFam" id="3.90.170.10:FF:000001">
    <property type="entry name" value="Adenylosuccinate synthetase"/>
    <property type="match status" value="1"/>
</dbReference>
<dbReference type="Gene3D" id="3.40.440.10">
    <property type="entry name" value="Adenylosuccinate Synthetase, subunit A, domain 1"/>
    <property type="match status" value="1"/>
</dbReference>
<dbReference type="Gene3D" id="1.10.300.10">
    <property type="entry name" value="Adenylosuccinate Synthetase, subunit A, domain 2"/>
    <property type="match status" value="1"/>
</dbReference>
<dbReference type="Gene3D" id="3.90.170.10">
    <property type="entry name" value="Adenylosuccinate Synthetase, subunit A, domain 3"/>
    <property type="match status" value="1"/>
</dbReference>
<dbReference type="HAMAP" id="MF_00011">
    <property type="entry name" value="Adenylosucc_synth"/>
    <property type="match status" value="1"/>
</dbReference>
<dbReference type="InterPro" id="IPR018220">
    <property type="entry name" value="Adenylosuccin_syn_GTP-bd"/>
</dbReference>
<dbReference type="InterPro" id="IPR033128">
    <property type="entry name" value="Adenylosuccin_syn_Lys_AS"/>
</dbReference>
<dbReference type="InterPro" id="IPR042109">
    <property type="entry name" value="Adenylosuccinate_synth_dom1"/>
</dbReference>
<dbReference type="InterPro" id="IPR042110">
    <property type="entry name" value="Adenylosuccinate_synth_dom2"/>
</dbReference>
<dbReference type="InterPro" id="IPR042111">
    <property type="entry name" value="Adenylosuccinate_synth_dom3"/>
</dbReference>
<dbReference type="InterPro" id="IPR001114">
    <property type="entry name" value="Adenylosuccinate_synthetase"/>
</dbReference>
<dbReference type="InterPro" id="IPR027417">
    <property type="entry name" value="P-loop_NTPase"/>
</dbReference>
<dbReference type="NCBIfam" id="NF002223">
    <property type="entry name" value="PRK01117.1"/>
    <property type="match status" value="1"/>
</dbReference>
<dbReference type="NCBIfam" id="TIGR00184">
    <property type="entry name" value="purA"/>
    <property type="match status" value="1"/>
</dbReference>
<dbReference type="PANTHER" id="PTHR11846">
    <property type="entry name" value="ADENYLOSUCCINATE SYNTHETASE"/>
    <property type="match status" value="1"/>
</dbReference>
<dbReference type="PANTHER" id="PTHR11846:SF0">
    <property type="entry name" value="ADENYLOSUCCINATE SYNTHETASE"/>
    <property type="match status" value="1"/>
</dbReference>
<dbReference type="Pfam" id="PF00709">
    <property type="entry name" value="Adenylsucc_synt"/>
    <property type="match status" value="1"/>
</dbReference>
<dbReference type="SMART" id="SM00788">
    <property type="entry name" value="Adenylsucc_synt"/>
    <property type="match status" value="1"/>
</dbReference>
<dbReference type="SUPFAM" id="SSF52540">
    <property type="entry name" value="P-loop containing nucleoside triphosphate hydrolases"/>
    <property type="match status" value="1"/>
</dbReference>
<dbReference type="PROSITE" id="PS01266">
    <property type="entry name" value="ADENYLOSUCCIN_SYN_1"/>
    <property type="match status" value="1"/>
</dbReference>
<dbReference type="PROSITE" id="PS00513">
    <property type="entry name" value="ADENYLOSUCCIN_SYN_2"/>
    <property type="match status" value="1"/>
</dbReference>
<proteinExistence type="inferred from homology"/>
<evidence type="ECO:0000255" key="1">
    <source>
        <dbReference type="HAMAP-Rule" id="MF_00011"/>
    </source>
</evidence>
<feature type="chain" id="PRO_0000095179" description="Adenylosuccinate synthetase">
    <location>
        <begin position="1"/>
        <end position="425"/>
    </location>
</feature>
<feature type="active site" description="Proton acceptor" evidence="1">
    <location>
        <position position="13"/>
    </location>
</feature>
<feature type="active site" description="Proton donor" evidence="1">
    <location>
        <position position="41"/>
    </location>
</feature>
<feature type="binding site" evidence="1">
    <location>
        <begin position="12"/>
        <end position="18"/>
    </location>
    <ligand>
        <name>GTP</name>
        <dbReference type="ChEBI" id="CHEBI:37565"/>
    </ligand>
</feature>
<feature type="binding site" description="in other chain" evidence="1">
    <location>
        <begin position="13"/>
        <end position="16"/>
    </location>
    <ligand>
        <name>IMP</name>
        <dbReference type="ChEBI" id="CHEBI:58053"/>
        <note>ligand shared between dimeric partners</note>
    </ligand>
</feature>
<feature type="binding site" evidence="1">
    <location>
        <position position="13"/>
    </location>
    <ligand>
        <name>Mg(2+)</name>
        <dbReference type="ChEBI" id="CHEBI:18420"/>
    </ligand>
</feature>
<feature type="binding site" description="in other chain" evidence="1">
    <location>
        <begin position="38"/>
        <end position="41"/>
    </location>
    <ligand>
        <name>IMP</name>
        <dbReference type="ChEBI" id="CHEBI:58053"/>
        <note>ligand shared between dimeric partners</note>
    </ligand>
</feature>
<feature type="binding site" evidence="1">
    <location>
        <begin position="40"/>
        <end position="42"/>
    </location>
    <ligand>
        <name>GTP</name>
        <dbReference type="ChEBI" id="CHEBI:37565"/>
    </ligand>
</feature>
<feature type="binding site" evidence="1">
    <location>
        <position position="40"/>
    </location>
    <ligand>
        <name>Mg(2+)</name>
        <dbReference type="ChEBI" id="CHEBI:18420"/>
    </ligand>
</feature>
<feature type="binding site" description="in other chain" evidence="1">
    <location>
        <position position="127"/>
    </location>
    <ligand>
        <name>IMP</name>
        <dbReference type="ChEBI" id="CHEBI:58053"/>
        <note>ligand shared between dimeric partners</note>
    </ligand>
</feature>
<feature type="binding site" evidence="1">
    <location>
        <position position="141"/>
    </location>
    <ligand>
        <name>IMP</name>
        <dbReference type="ChEBI" id="CHEBI:58053"/>
        <note>ligand shared between dimeric partners</note>
    </ligand>
</feature>
<feature type="binding site" description="in other chain" evidence="1">
    <location>
        <position position="222"/>
    </location>
    <ligand>
        <name>IMP</name>
        <dbReference type="ChEBI" id="CHEBI:58053"/>
        <note>ligand shared between dimeric partners</note>
    </ligand>
</feature>
<feature type="binding site" description="in other chain" evidence="1">
    <location>
        <position position="237"/>
    </location>
    <ligand>
        <name>IMP</name>
        <dbReference type="ChEBI" id="CHEBI:58053"/>
        <note>ligand shared between dimeric partners</note>
    </ligand>
</feature>
<feature type="binding site" evidence="1">
    <location>
        <begin position="297"/>
        <end position="303"/>
    </location>
    <ligand>
        <name>substrate</name>
    </ligand>
</feature>
<feature type="binding site" description="in other chain" evidence="1">
    <location>
        <position position="301"/>
    </location>
    <ligand>
        <name>IMP</name>
        <dbReference type="ChEBI" id="CHEBI:58053"/>
        <note>ligand shared between dimeric partners</note>
    </ligand>
</feature>
<feature type="binding site" evidence="1">
    <location>
        <position position="303"/>
    </location>
    <ligand>
        <name>GTP</name>
        <dbReference type="ChEBI" id="CHEBI:37565"/>
    </ligand>
</feature>
<feature type="binding site" evidence="1">
    <location>
        <begin position="329"/>
        <end position="331"/>
    </location>
    <ligand>
        <name>GTP</name>
        <dbReference type="ChEBI" id="CHEBI:37565"/>
    </ligand>
</feature>
<feature type="binding site" evidence="1">
    <location>
        <begin position="411"/>
        <end position="413"/>
    </location>
    <ligand>
        <name>GTP</name>
        <dbReference type="ChEBI" id="CHEBI:37565"/>
    </ligand>
</feature>
<keyword id="KW-0963">Cytoplasm</keyword>
<keyword id="KW-0342">GTP-binding</keyword>
<keyword id="KW-0436">Ligase</keyword>
<keyword id="KW-0460">Magnesium</keyword>
<keyword id="KW-0479">Metal-binding</keyword>
<keyword id="KW-0547">Nucleotide-binding</keyword>
<keyword id="KW-0658">Purine biosynthesis</keyword>
<reference key="1">
    <citation type="patent" date="1991-01-29" number="US4988620">
        <title>Method for producing the FnuDI restriction endonuclease and methylase.</title>
        <authorList>
            <person name="Zhang B.-H."/>
            <person name="Wilson G.G."/>
        </authorList>
    </citation>
    <scope>NUCLEOTIDE SEQUENCE [GENOMIC DNA]</scope>
    <source>
        <strain>D</strain>
    </source>
</reference>
<sequence>MAGYVVVGTQWGDEGKGKIIDVLSEKADYVVRFQGGNNAGHTVVVNGEKFILQLLPSGVLQAGTCVIGPGVVVDPKVFLDEIDRIEKRGAKTDHVIISDRAHVIMPYHIEMDKIRESVEDRIKIGTTKKGIGPCYADKIARDGIRMSDLLDLKQFEEKLRANLKEKNEIFTKIYGLEPLDFDKIFEEYKGYIEKIKHRIVDTIPIVNKALDENKLVLFEGAQAMMLDINYGTYPYVTSSSPTLGGVTTGAGVSPRKINKGIGVMKAYTTRVGEGPFVTEIKGEFGDKIKGIGGEYGAVTGRPRRCGWLDLVVGRYATEINGLTDIVITKIDVLSGLGKLKICTAYEIDGKVYDYVPADTKSLDKAIPIYEELDGWDEDITQIKKYEDLPVNCRKYLERVQEILACPISVVSVGPDRSQNIHIREI</sequence>
<accession>O68581</accession>
<protein>
    <recommendedName>
        <fullName evidence="1">Adenylosuccinate synthetase</fullName>
        <shortName evidence="1">AMPSase</shortName>
        <shortName evidence="1">AdSS</shortName>
        <ecNumber evidence="1">6.3.4.4</ecNumber>
    </recommendedName>
    <alternativeName>
        <fullName evidence="1">IMP--aspartate ligase</fullName>
    </alternativeName>
</protein>
<comment type="function">
    <text evidence="1">Plays an important role in the de novo pathway of purine nucleotide biosynthesis. Catalyzes the first committed step in the biosynthesis of AMP from IMP.</text>
</comment>
<comment type="catalytic activity">
    <reaction evidence="1">
        <text>IMP + L-aspartate + GTP = N(6)-(1,2-dicarboxyethyl)-AMP + GDP + phosphate + 2 H(+)</text>
        <dbReference type="Rhea" id="RHEA:15753"/>
        <dbReference type="ChEBI" id="CHEBI:15378"/>
        <dbReference type="ChEBI" id="CHEBI:29991"/>
        <dbReference type="ChEBI" id="CHEBI:37565"/>
        <dbReference type="ChEBI" id="CHEBI:43474"/>
        <dbReference type="ChEBI" id="CHEBI:57567"/>
        <dbReference type="ChEBI" id="CHEBI:58053"/>
        <dbReference type="ChEBI" id="CHEBI:58189"/>
        <dbReference type="EC" id="6.3.4.4"/>
    </reaction>
</comment>
<comment type="cofactor">
    <cofactor evidence="1">
        <name>Mg(2+)</name>
        <dbReference type="ChEBI" id="CHEBI:18420"/>
    </cofactor>
    <text evidence="1">Binds 1 Mg(2+) ion per subunit.</text>
</comment>
<comment type="pathway">
    <text evidence="1">Purine metabolism; AMP biosynthesis via de novo pathway; AMP from IMP: step 1/2.</text>
</comment>
<comment type="subunit">
    <text evidence="1">Homodimer.</text>
</comment>
<comment type="subcellular location">
    <subcellularLocation>
        <location evidence="1">Cytoplasm</location>
    </subcellularLocation>
</comment>
<comment type="similarity">
    <text evidence="1">Belongs to the adenylosuccinate synthetase family.</text>
</comment>
<gene>
    <name evidence="1" type="primary">purA</name>
</gene>
<name>PURA_FUSNU</name>
<organism>
    <name type="scientific">Fusobacterium nucleatum</name>
    <dbReference type="NCBI Taxonomy" id="851"/>
    <lineage>
        <taxon>Bacteria</taxon>
        <taxon>Fusobacteriati</taxon>
        <taxon>Fusobacteriota</taxon>
        <taxon>Fusobacteriia</taxon>
        <taxon>Fusobacteriales</taxon>
        <taxon>Fusobacteriaceae</taxon>
        <taxon>Fusobacterium</taxon>
    </lineage>
</organism>